<gene>
    <name evidence="11" type="primary">Macf1</name>
    <name type="synonym">Acf7</name>
    <name type="synonym">Aclp7</name>
    <name type="synonym">Macf</name>
</gene>
<feature type="chain" id="PRO_0000409709" description="Microtubule-actin cross-linking factor 1">
    <location>
        <begin position="1"/>
        <end position="5430"/>
    </location>
</feature>
<feature type="domain" description="Calponin-homology (CH) 1" evidence="4">
    <location>
        <begin position="78"/>
        <end position="181"/>
    </location>
</feature>
<feature type="repeat" description="LRR 1">
    <location>
        <begin position="148"/>
        <end position="171"/>
    </location>
</feature>
<feature type="domain" description="Calponin-homology (CH) 2" evidence="4">
    <location>
        <begin position="194"/>
        <end position="298"/>
    </location>
</feature>
<feature type="repeat" description="LRR 2">
    <location>
        <begin position="240"/>
        <end position="264"/>
    </location>
</feature>
<feature type="repeat" description="LRR 3">
    <location>
        <begin position="377"/>
        <end position="399"/>
    </location>
</feature>
<feature type="repeat" description="LRR 4">
    <location>
        <begin position="441"/>
        <end position="464"/>
    </location>
</feature>
<feature type="domain" description="SH3" evidence="5">
    <location>
        <begin position="868"/>
        <end position="925"/>
    </location>
</feature>
<feature type="repeat" description="LRR 5">
    <location>
        <begin position="1050"/>
        <end position="1073"/>
    </location>
</feature>
<feature type="repeat" description="LRR 6">
    <location>
        <begin position="1128"/>
        <end position="1154"/>
    </location>
</feature>
<feature type="repeat" description="LRR 7">
    <location>
        <begin position="1187"/>
        <end position="1210"/>
    </location>
</feature>
<feature type="repeat" description="LRR 8">
    <location>
        <begin position="1257"/>
        <end position="1282"/>
    </location>
</feature>
<feature type="repeat" description="LRR 9">
    <location>
        <begin position="1579"/>
        <end position="1602"/>
    </location>
</feature>
<feature type="repeat" description="LRR 10">
    <location>
        <begin position="1629"/>
        <end position="1653"/>
    </location>
</feature>
<feature type="repeat" description="Spectrin 1">
    <location>
        <begin position="1816"/>
        <end position="1891"/>
    </location>
</feature>
<feature type="repeat" description="LRR 11">
    <location>
        <begin position="1869"/>
        <end position="1891"/>
    </location>
</feature>
<feature type="repeat" description="Spectrin 2">
    <location>
        <begin position="1933"/>
        <end position="2041"/>
    </location>
</feature>
<feature type="repeat" description="LRR 12">
    <location>
        <begin position="2058"/>
        <end position="2083"/>
    </location>
</feature>
<feature type="repeat" description="LRR 13">
    <location>
        <begin position="2194"/>
        <end position="2220"/>
    </location>
</feature>
<feature type="repeat" description="Spectrin 3">
    <location>
        <begin position="2399"/>
        <end position="2507"/>
    </location>
</feature>
<feature type="repeat" description="LRR 14">
    <location>
        <begin position="2444"/>
        <end position="2467"/>
    </location>
</feature>
<feature type="repeat" description="LRR 15">
    <location>
        <begin position="2534"/>
        <end position="2557"/>
    </location>
</feature>
<feature type="repeat" description="LRR 16">
    <location>
        <begin position="2702"/>
        <end position="2725"/>
    </location>
</feature>
<feature type="repeat" description="Spectrin 4">
    <location>
        <begin position="2733"/>
        <end position="2837"/>
    </location>
</feature>
<feature type="repeat" description="Spectrin 5">
    <location>
        <begin position="2842"/>
        <end position="2945"/>
    </location>
</feature>
<feature type="repeat" description="LRR 17">
    <location>
        <begin position="2984"/>
        <end position="3009"/>
    </location>
</feature>
<feature type="repeat" description="LRR 18">
    <location>
        <begin position="3105"/>
        <end position="3127"/>
    </location>
</feature>
<feature type="repeat" description="Spectrin 6">
    <location>
        <begin position="3169"/>
        <end position="3274"/>
    </location>
</feature>
<feature type="repeat" description="LRR 19">
    <location>
        <begin position="3214"/>
        <end position="3237"/>
    </location>
</feature>
<feature type="repeat" description="Spectrin 7">
    <location>
        <begin position="3281"/>
        <end position="3383"/>
    </location>
</feature>
<feature type="repeat" description="Spectrin 8">
    <location>
        <begin position="3388"/>
        <end position="3491"/>
    </location>
</feature>
<feature type="repeat" description="Spectrin 9">
    <location>
        <begin position="3714"/>
        <end position="3818"/>
    </location>
</feature>
<feature type="repeat" description="LRR 20">
    <location>
        <begin position="3737"/>
        <end position="3761"/>
    </location>
</feature>
<feature type="repeat" description="Spectrin 10">
    <location>
        <begin position="3825"/>
        <end position="3927"/>
    </location>
</feature>
<feature type="repeat" description="LRR 21">
    <location>
        <begin position="3846"/>
        <end position="3870"/>
    </location>
</feature>
<feature type="repeat" description="Spectrin 11">
    <location>
        <begin position="4047"/>
        <end position="4152"/>
    </location>
</feature>
<feature type="repeat" description="Spectrin 12">
    <location>
        <begin position="4157"/>
        <end position="4261"/>
    </location>
</feature>
<feature type="repeat" description="Spectrin 13">
    <location>
        <begin position="4267"/>
        <end position="4370"/>
    </location>
</feature>
<feature type="repeat" description="Spectrin 14">
    <location>
        <begin position="4375"/>
        <end position="4481"/>
    </location>
</feature>
<feature type="repeat" description="Spectrin 15">
    <location>
        <begin position="4486"/>
        <end position="4589"/>
    </location>
</feature>
<feature type="repeat" description="LRR 22">
    <location>
        <begin position="4538"/>
        <end position="4561"/>
    </location>
</feature>
<feature type="repeat" description="Spectrin 16">
    <location>
        <begin position="4594"/>
        <end position="4700"/>
    </location>
</feature>
<feature type="repeat" description="Spectrin 17">
    <location>
        <begin position="4707"/>
        <end position="4808"/>
    </location>
</feature>
<feature type="repeat" description="Spectrin 18">
    <location>
        <begin position="4812"/>
        <end position="4916"/>
    </location>
</feature>
<feature type="domain" description="EF-hand 1" evidence="6">
    <location>
        <begin position="5083"/>
        <end position="5118"/>
    </location>
</feature>
<feature type="domain" description="EF-hand 2" evidence="6">
    <location>
        <begin position="5119"/>
        <end position="5154"/>
    </location>
</feature>
<feature type="domain" description="GAR" evidence="7">
    <location>
        <begin position="5159"/>
        <end position="5231"/>
    </location>
</feature>
<feature type="region of interest" description="Actin-binding">
    <location>
        <begin position="1"/>
        <end position="295"/>
    </location>
</feature>
<feature type="region of interest" description="Disordered" evidence="8">
    <location>
        <begin position="1"/>
        <end position="47"/>
    </location>
</feature>
<feature type="region of interest" description="Disordered" evidence="8">
    <location>
        <begin position="4993"/>
        <end position="5023"/>
    </location>
</feature>
<feature type="region of interest" description="C-terminal tail" evidence="1">
    <location>
        <begin position="5159"/>
        <end position="5430"/>
    </location>
</feature>
<feature type="region of interest" description="Disordered" evidence="8">
    <location>
        <begin position="5247"/>
        <end position="5430"/>
    </location>
</feature>
<feature type="region of interest" description="4 X 4 AA tandem repeats of [GS]-S-R-[AR]">
    <location>
        <begin position="5355"/>
        <end position="5370"/>
    </location>
</feature>
<feature type="compositionally biased region" description="Basic and acidic residues" evidence="8">
    <location>
        <begin position="9"/>
        <end position="30"/>
    </location>
</feature>
<feature type="compositionally biased region" description="Low complexity" evidence="8">
    <location>
        <begin position="5267"/>
        <end position="5301"/>
    </location>
</feature>
<feature type="compositionally biased region" description="Polar residues" evidence="8">
    <location>
        <begin position="5317"/>
        <end position="5341"/>
    </location>
</feature>
<feature type="compositionally biased region" description="Low complexity" evidence="8">
    <location>
        <begin position="5352"/>
        <end position="5366"/>
    </location>
</feature>
<feature type="compositionally biased region" description="Polar residues" evidence="8">
    <location>
        <begin position="5381"/>
        <end position="5391"/>
    </location>
</feature>
<feature type="compositionally biased region" description="Low complexity" evidence="8">
    <location>
        <begin position="5392"/>
        <end position="5403"/>
    </location>
</feature>
<feature type="binding site" evidence="6">
    <location>
        <position position="5096"/>
    </location>
    <ligand>
        <name>Ca(2+)</name>
        <dbReference type="ChEBI" id="CHEBI:29108"/>
        <label>1</label>
    </ligand>
</feature>
<feature type="binding site" evidence="6">
    <location>
        <position position="5098"/>
    </location>
    <ligand>
        <name>Ca(2+)</name>
        <dbReference type="ChEBI" id="CHEBI:29108"/>
        <label>1</label>
    </ligand>
</feature>
<feature type="binding site" evidence="6">
    <location>
        <position position="5100"/>
    </location>
    <ligand>
        <name>Ca(2+)</name>
        <dbReference type="ChEBI" id="CHEBI:29108"/>
        <label>1</label>
    </ligand>
</feature>
<feature type="binding site" evidence="6">
    <location>
        <position position="5102"/>
    </location>
    <ligand>
        <name>Ca(2+)</name>
        <dbReference type="ChEBI" id="CHEBI:29108"/>
        <label>1</label>
    </ligand>
</feature>
<feature type="binding site" evidence="6">
    <location>
        <position position="5107"/>
    </location>
    <ligand>
        <name>Ca(2+)</name>
        <dbReference type="ChEBI" id="CHEBI:29108"/>
        <label>1</label>
    </ligand>
</feature>
<feature type="binding site" evidence="6">
    <location>
        <position position="5132"/>
    </location>
    <ligand>
        <name>Ca(2+)</name>
        <dbReference type="ChEBI" id="CHEBI:29108"/>
        <label>2</label>
    </ligand>
</feature>
<feature type="binding site" evidence="6">
    <location>
        <position position="5134"/>
    </location>
    <ligand>
        <name>Ca(2+)</name>
        <dbReference type="ChEBI" id="CHEBI:29108"/>
        <label>2</label>
    </ligand>
</feature>
<feature type="binding site" evidence="6">
    <location>
        <position position="5136"/>
    </location>
    <ligand>
        <name>Ca(2+)</name>
        <dbReference type="ChEBI" id="CHEBI:29108"/>
        <label>2</label>
    </ligand>
</feature>
<feature type="binding site" evidence="6">
    <location>
        <position position="5138"/>
    </location>
    <ligand>
        <name>Ca(2+)</name>
        <dbReference type="ChEBI" id="CHEBI:29108"/>
        <label>2</label>
    </ligand>
</feature>
<feature type="binding site" evidence="6">
    <location>
        <position position="5143"/>
    </location>
    <ligand>
        <name>Ca(2+)</name>
        <dbReference type="ChEBI" id="CHEBI:29108"/>
        <label>2</label>
    </ligand>
</feature>
<feature type="modified residue" description="Phosphoserine" evidence="13">
    <location>
        <position position="4"/>
    </location>
</feature>
<feature type="modified residue" description="Phosphoserine" evidence="2">
    <location>
        <position position="35"/>
    </location>
</feature>
<feature type="modified residue" description="Phosphoserine" evidence="2">
    <location>
        <position position="57"/>
    </location>
</feature>
<feature type="modified residue" description="Phosphoserine" evidence="13">
    <location>
        <position position="280"/>
    </location>
</feature>
<feature type="modified residue" description="Phosphoserine" evidence="3">
    <location>
        <position position="1122"/>
    </location>
</feature>
<feature type="modified residue" description="Phosphoserine" evidence="3">
    <location>
        <position position="1367"/>
    </location>
</feature>
<feature type="modified residue" description="Phosphoserine" evidence="3">
    <location>
        <position position="1376"/>
    </location>
</feature>
<feature type="modified residue" description="Phosphoserine" evidence="13">
    <location>
        <position position="1860"/>
    </location>
</feature>
<feature type="modified residue" description="Phosphoserine" evidence="13">
    <location>
        <position position="2429"/>
    </location>
</feature>
<feature type="modified residue" description="Phosphoserine" evidence="13">
    <location>
        <position position="2454"/>
    </location>
</feature>
<feature type="modified residue" description="Phosphoserine" evidence="3">
    <location>
        <position position="2769"/>
    </location>
</feature>
<feature type="modified residue" description="Phosphoserine" evidence="3">
    <location>
        <position position="2895"/>
    </location>
</feature>
<feature type="modified residue" description="Phosphothreonine" evidence="2">
    <location>
        <position position="3368"/>
    </location>
</feature>
<feature type="modified residue" description="Phosphoserine" evidence="13">
    <location>
        <position position="4074"/>
    </location>
</feature>
<feature type="modified residue" description="N6-acetyllysine" evidence="3">
    <location>
        <position position="4252"/>
    </location>
</feature>
<feature type="modified residue" description="Phosphoserine" evidence="3">
    <location>
        <position position="5009"/>
    </location>
</feature>
<feature type="modified residue" description="Phosphothreonine" evidence="12">
    <location>
        <position position="5296"/>
    </location>
</feature>
<feature type="modified residue" description="Phosphoserine" evidence="3">
    <location>
        <position position="5321"/>
    </location>
</feature>
<feature type="modified residue" description="Phosphoserine" evidence="3">
    <location>
        <position position="5334"/>
    </location>
</feature>
<feature type="modified residue" description="Phosphoserine" evidence="3">
    <location>
        <position position="5372"/>
    </location>
</feature>
<feature type="modified residue" description="Phosphoserine" evidence="2">
    <location>
        <position position="5375"/>
    </location>
</feature>
<sequence>MSSSDEETLSERSCRSERSCRSERSYRSERSGSLSPCPPGDTLPWNLPLHEQKKRKSQDSVLDPAERAVVRVADERDRVQKKTFTKWVNKHLMKVRKHINDLYEDLRDGHNLISLLEVLSGIKLPREKGRMRFHRLQNVQIALDFLKQRQVKLVNIRNDDITDGNPKLTLGLIWTIILHFQISDIYISGESGDMSAKEKLLLWTQKVTAGYTGIKCTNFSSCWSDGKMFNALIHRYRPDLVDMERVQIQSNRENLEQAFEVAERLGVTRLLDAEDVDVPSPDEKSVITYVSSIYDAFPKVPEGGEGISATEVDSRWQEYQSRVDSLIPWIRQHTILMSDKSFPQNPVELKALYNQYIHFKETEILAKEREKGRIKELYKLLEVWIEFGRIKLPQGYHPNHVEEEWGKLIVEMLEREKSLRPAVERLELLLQIANKIQNGALNCEEKLTLAKNTLQADAAHLESGQPVQCESDVIMYIQECEGLIRQLQVDLQILRDEKYYQLEELAFRVMRLQDELVTLRLECTNLYRKGHFTSLELVPPSTLTTTHLKAEPLNKTTHSSSTSWFRKPMTRTELVAISSSEDEGSLRFVYELLSWVEEMQMKLERAEWGNDLPSVELQWETQQHIHTSVEELGSSVKEARLYEGKMSQNFHTSYVETLGKLETQYCKLKETSSFRMRHLQSLHKFVSKATAELIWLNGKEEEELACDWSDSNPNISAKKAYFSELTMELEGKQDVFRSLQDTAELLSLENHPAKQTVEAYSAAVQSQLQWMKQLCLCVEQHIKENAAYFQFFSDARDLESFLRNLQDSIKRKYTCDHNTSLSRLEDLLQDSMDEKEQLIQSKSSVASLVGRSKTIVQLKPRNPDHVLKSTLSVKAICDYRQIEITICKNDECVLEDNSQRTKWKVISPTGNEAMVPSVCLLIPPPNTEAIDVASRVEQSYQKVMALWHQLHINTKSLISWNYLRKDIDAVQTWNLEKLRSSAPGECHQVMKNLQAHYEDFLQDSHDSALFSVADRLRIEEEVEACKTHFQQLMESMENEDKEETLAKVYISELKNIRLRLEECEQRLLKQIQSSASSKTDRDARQDVALRIAEQEHVQEDLKHLRSDLDAVSVKCTTFLQQSPSGSSATTLRSELNLMVEKMDHVYGLSIVCLNKLKTIDVIVRSIQDAELLVKGYEIKLSQEEAVPADLSALESHRTTLQHWLSDVKDKNSVFSVLDEEISKAKAVAEQLHHRAAEPNLDLERYQEKGSQLQERWHRVIAQLETRQSEVESIQEVLRDYRACHGTLIKWIEETTAQQEMMKPGQAEDSRVLSEQLSQQTELFAEIERNQTKLDQCQKLSQQYSTTVKDYELQLMTYKAFVESQQKSPGKRRRMISSSDAITQEFMDLRTRYTALVTLTTQHVKYISDALRRLEEEEKVVEEEKQEHVEKVKDLLGWVSTLARNTQGTTTSSRTSASTDIEKAILEQQVLAEELTTKKEQVSEAIKTSQIFLAKHGHKLSEREKEQISEQLCALNKTYHDLCDGSANQLQQLQSELAQQTEQKTLQKQQDTCHKKLEDLRSWVRQAERALERHRGRASQQELSALQQNQSDLKDLQGDIQNHSTSFATAVKDIEGFLEENQNKLSPQELTALREKLYQAKEQYEGLQDRTREAQKELEEAVTSALQQETEKSKAATELAENRRKIDALLDWVTSVGSSDRQPQTSLPGTEQFSGACLEKQTLDATDGCVDVNQVPEKLDRQYELMKARHQELLSQQQNFIVATQSAQSFLDQHSHNLTPEERQMLQEKLGELKEQYAASLAQSEAKLRQTQTLRDELQKFLQDHREFENWLERSENELDGMHTGGSSPEALNSLLKRQGSFSEDVISHKGDLRFVTISGQKVLETENNFEEGQEPSPTRNLVNEKLKDATERYTTLHSKCTRLGSHLNMLLGQYQQFQSSADSLQAWMLTCEASVEKLLSDTVASDPGILQQQLATTKQLQEELAEHQVPVEKLQKAAHDLMDIEGEPSLDCTPIRETTESIFSRFQSLSCSLAERSALLQKAIAQSQSVQESMESLLQSMKEVEQNLEGEQVAALSSGLIQEALANNMKLKQDIARQKSSLEATREMVTRFMETADGNSAAVLQDRLAELSQRFHRLQLQQQEKESGLKKLLPQAETFEQLSSKLQQFVEHKNRLLASGNQPDQDIAHFSQHIQELTLEMEDQKENLGTLEHLVTALGSCGFALDLSQHQEKIQNLKKDFTELQKTVQEREKDASNCQEQLDEFRKLIRTFQKWLKETEGNVPPAETFVSAKELEKQIEHLKGLLDDWAGKGVLVEEINTKGTALESLIMDITAPDSQAKTGSVLPSVGSSVGSVNGYHTCKDLTEIQCDMSDVNSKYDKLGDALRERQESLQTVLSRMEEVQKEASSVLQWLESKEEVLKGMDASLSPTKTETVKAQAESNKAFLAELEQNSPKIQKVKEALAGLLEAYPNSQEAENWRKMQEDLNSRWEKATEVTVARQKQLEESASHLACFQAAESQLRPWLMEKELMMGVLGPLSIDPNMLNAQKQQVQFMLKEFEARRQQHEQLTEAAQGILTGPGDVSPSASQVHKDLQSISQKWVELTDKLNSRSTQIDQAIVKSTQYQDLLQDLSEKVKAVGQRLSGQSAISTQPDAVKQQLEETSEIRSDLGQLDDEMKEAQTLCQELSLLIGEQYLKDELKKRLETVALPLQGLEDLAADRMNRLQAALASTQQFQQMFDELRTWLDEKQSQQAKNCPISAKLERLQSQLQENEEFQKNLNQHSGSYEVIVAEGESLLLSVPPGEEKKTLQNQLVELKSHWEDLNKKTVDRQSRLKDCMQKAQKYQWHVEDLVPWIKDCKSKMSELQVTLDPVQLESSLLRSKAMLNEAEKRRSLLEILNSAADILINSSEIDEDEIRDEKAGLNQNMDAITEELQAKTGSLEEMTQRLKEFQESFKNIEKKVEGAKHQLEIFDALGSQACSNKNLEKLKAQREVLQALDPQVDYLRDFTRGLVEDAPDGSDASPLVHQAELAQQEFLEVKQRVNSSCLTMENKLEGIGQFHCRVREMFSQLADLDDELDGMGAIGRDTDSLQSQIEDIRLFLNKIQALRLDIEDSEAECRKMLEEEGTLDLLGLKRELEALNKQCGKLTERGKARQEQLELTLGRVEDFYSKLKALNDAATAAEEGEALQWIVGTEVDVINQQLADFKMFQKEQVDPLQVKLQQVNGLGQGLIQSAGKTCDVQGLEHDMEEVNTRWNTLNKKVAQRIAQLQEALLHCGKFQDALEPLLSWLTDTEELIANQKPPSAEYKVVKAQIQEQKLLQRLLDDRKATVDMLQAEGGRIAQAAELADREKITGQLESLECRWTELLSKAAARQKQLEDILVLAKQFHETAEPISDFLSVTEKKLANSEPVGTQTAKIHQQIIRHKALEEEIENHAADVQQAVKIGQSLSSLICPAEQGIMSEKLDSLQARYSEIQDRCCRKASLLEQALFNARLFGEDEVEVLNWLAEVEDKLSAVFVKDYRQDVLQKQHADHLALNEEIINRKKNVDQAIKNGQALLKQTTGEEVLLIQEKLDGIKTRYADITVTSSKALRTLEQARQLATKFHSTYEELTGWLREVEEELAASGGQSPTGEQIPQFQQRQKELKKEVMEHRLVLDTVNEVSHALLELVPWRAREGLDKLVSDANEQYKLVSDTVGQRVDEIDAAIQRSQQYEQAADAELAWVAETKRKLMALGPIRLEQDQTTAQLQVQKAFSIDIIRHKDSMDELFSHRGEIFSTCGEEQKAVLQEKTECLIQQYEAVSLLNSERYARLERAQVLVNQFWETYEELSPWAEETLALIAQLPPPAVDHEQLRQQQEEMRQLRESIAEHKPHIDKILKIGPQLKELNPEEGKMVEEKYQKAENMYAQIKDEVRQRALALDEAVSQSAQIAEFHDKIEPMLETLENLSSRLRMPPLIPAEVDKIRECISDNKSATMELEKLQPSFEALKRRGEELIGRSQGADKDLAAKEIQDKLDQMVFFWEDIKARSEEREIKFLDVLELAEKFWYDMAALLTTIKDTQEIVHDLESPGIDPSIIKQQVEAAETIKEETDGLHEELEFIRILGADLIFACGETEKPEVKKSIDEMNNAWENLNRTWKERLEKLEDAMQAAVQYQDTLQAMFDWLDNTVIRLCTMPPVGTDLNTVKDQLNEMKEFKVEVYQQQIEMEKLNHQGELMLKKATDETDRDIIREPLTELKHLWENLGEKIAHRQHKLEGALLALGQFQHALEELMGWLTHTEELLDAQRPISGDPKVIEVELAKHHVLKNDVLAHQATVETVNKAGNELLESSAGDDASSLRSRLETMNQCWESVLQKTEEREQQLQSTLQQAQGFHSEIEEFLLELNRMESQLSASKPTGGLPETAREQLDAHMELHSQLRAKEEIYNQLLDKGRLMLLSRGDSGSGSKTEQSVALLEQKWHVVSSKVEERKSKLEEALSLATEFQNSLQEFINWLTLAEQSLNIASPPSLILNTVLSQIEEHKVFANEVNAHRDQIIELDQTGNQLKFLSQKQDVVLIKNLLVSVQSRWEKVVQRSIERGRSLDDARKRAKQFHEAWKKLIDWLEDAESHLDSELEISNDPDKIKLQLSKHKEFQKTLGGKQPVYDTTIRTGRALKEKTLLADDAQKLDNLLGEVRDKWDTVCGKSVERQHKLEEALLFSGQFMDALQALVDWLYKVEPQLAEDQPVHGDLDLVMNLMDAHKVFQKELGKRTGTVQVLKRSGRELIESSRDDTTWVKGQLQELSTRWDTVCKLSVSKQSRLEQALKQAEEFRDTVHMLLEWLSEAEQTLRFRGALPDDTEALQSLIDTHKEFMKKVEEKRVDVNAAVAMGEVILAVCHPDCITTIKHWITIIRARFEEVLTWAKQHQQRLETALSELVANAELLEELLAWIQWAETTLIQRDQEPIPQNIDRVKALITEHQSFMEEMTRKQPDVDRVTKTYKRKNIEPTHAPFIEKSRSGSRKSLNQPTPPPMPILSQSEAKNPRINQLSARWQQVWLLALERQRKLNDALDRLEELKEFANFDFDVWRKKYMRWMNHKKSRVMDFFRRIDKDQDGKITRQEFIDGILASKFPTTKLEMTAVADIFDRDGDGYIDYYEFVAALHPNKDAYRPTTDADKIEDEVTRQVAQCKCAKRFQVEQIGENKYRFGDSQQLRLVRILRSTVMVRVGGGWMALDEFLVKNDPCRARGRTNIELREKFILPEGASQGMTPFRSRGRRSKPSSRAASPTRSSSSASQSNHSCTSMPSSPATPASGTKVISSTGSKLKRPTPTFHSSRTSLAGDTSNSSSPASTGAKTNRADPKKSASRPGSRAGSRAGSRASSRRGSDASDFDLLETQSACSDTSESSAAGGQGSSRRGLTKPSKIPTMSKKTTTASPRTPCPKR</sequence>
<keyword id="KW-0007">Acetylation</keyword>
<keyword id="KW-0009">Actin-binding</keyword>
<keyword id="KW-0106">Calcium</keyword>
<keyword id="KW-1003">Cell membrane</keyword>
<keyword id="KW-0966">Cell projection</keyword>
<keyword id="KW-0963">Cytoplasm</keyword>
<keyword id="KW-0206">Cytoskeleton</keyword>
<keyword id="KW-0333">Golgi apparatus</keyword>
<keyword id="KW-0433">Leucine-rich repeat</keyword>
<keyword id="KW-0472">Membrane</keyword>
<keyword id="KW-0479">Metal-binding</keyword>
<keyword id="KW-0493">Microtubule</keyword>
<keyword id="KW-0597">Phosphoprotein</keyword>
<keyword id="KW-1185">Reference proteome</keyword>
<keyword id="KW-0677">Repeat</keyword>
<keyword id="KW-0728">SH3 domain</keyword>
<keyword id="KW-0879">Wnt signaling pathway</keyword>
<comment type="function">
    <text evidence="2 3">F-actin-binding protein which plays a role in cross-linking actin to other cytoskeletal proteins and also binds to microtubules. Plays an important role in ERBB2-dependent stabilization of microtubules at the cell cortex (By similarity). Acts as a positive regulator of Wnt receptor signaling pathway and is involved in the translocation of AXIN1 and its associated complex (composed of APC, CTNNB1 and GSK3B) from the cytoplasm to the cell membrane (By similarity). Has actin-regulated ATPase activity and is essential for controlling focal adhesions (FAs) assembly and dynamics (By similarity). Interaction with CAMSAP3 at the minus ends of non-centrosomal microtubules tethers microtubules minus-ends to actin filaments, regulating focal adhesion size and cell migration (By similarity). May play role in delivery of transport vesicles containing GPI-linked proteins from the trans-Golgi network through its interaction with GOLGA4 (By similarity). Plays a key role in wound healing and epidermal cell migration (By similarity). Required for efficient upward migration of bulge cells in response to wounding and this function is primarily rooted in its ability to coordinate microtubule dynamics and polarize hair follicle stem cells (By similarity). As a regulator of actin and microtubule arrangement and stabilization, it plays an essential role in neurite outgrowth, branching and spine formation during brain development (By similarity).</text>
</comment>
<comment type="subunit">
    <text evidence="2 3 9">Interacts with MAPRE1, CLASP1, CLASP2 and GOLGA4 (By similarity). Interacts with AXIN1 and LRP6 (PubMed:16815997). Found in a complex composed of MACF1, APC; AXIN1, CTNNB1 and GSK3B (PubMed:16815997). Interacts with CAMSAP3 (By similarity).</text>
</comment>
<comment type="subcellular location">
    <subcellularLocation>
        <location evidence="3">Cytoplasm</location>
        <location evidence="3">Cytoskeleton</location>
    </subcellularLocation>
    <subcellularLocation>
        <location evidence="3">Cytoplasm</location>
    </subcellularLocation>
    <subcellularLocation>
        <location evidence="3">Golgi apparatus</location>
    </subcellularLocation>
    <subcellularLocation>
        <location evidence="3">Cell membrane</location>
    </subcellularLocation>
    <subcellularLocation>
        <location evidence="3">Cell projection</location>
        <location evidence="3">Ruffle membrane</location>
    </subcellularLocation>
    <subcellularLocation>
        <location evidence="9">Membrane</location>
    </subcellularLocation>
    <text evidence="2 3">The phosphorylated form is found in the cytoplasm while the non-phosphorylated form associates with the microtubules (By similarity). Localizes to the tips of microtubules. Associated with the minus-end of microtubules via interaction with CAMSAP3. APC controls its localization to the cell membrane which is critical for its function in microtubule stabilization (By similarity).</text>
</comment>
<comment type="domain">
    <text evidence="2">The C-terminal tail is required for phosphorylation by GSK3B and for microtubule-binding.</text>
</comment>
<comment type="PTM">
    <text evidence="1">Phosphorylated on serine residues in the C-terminal tail by GSK3B. Phosphorylation inhibits microtubule-binding and this plays a critical role in bulge stem cell migration and skin wound repair. Wnt-signaling can repress phosphorylation (By similarity).</text>
</comment>
<comment type="similarity">
    <text evidence="10">Belongs to the plakin or cytolinker family.</text>
</comment>
<organism>
    <name type="scientific">Rattus norvegicus</name>
    <name type="common">Rat</name>
    <dbReference type="NCBI Taxonomy" id="10116"/>
    <lineage>
        <taxon>Eukaryota</taxon>
        <taxon>Metazoa</taxon>
        <taxon>Chordata</taxon>
        <taxon>Craniata</taxon>
        <taxon>Vertebrata</taxon>
        <taxon>Euteleostomi</taxon>
        <taxon>Mammalia</taxon>
        <taxon>Eutheria</taxon>
        <taxon>Euarchontoglires</taxon>
        <taxon>Glires</taxon>
        <taxon>Rodentia</taxon>
        <taxon>Myomorpha</taxon>
        <taxon>Muroidea</taxon>
        <taxon>Muridae</taxon>
        <taxon>Murinae</taxon>
        <taxon>Rattus</taxon>
    </lineage>
</organism>
<protein>
    <recommendedName>
        <fullName evidence="10">Microtubule-actin cross-linking factor 1</fullName>
    </recommendedName>
    <alternativeName>
        <fullName>Actin cross-linking family 7</fullName>
    </alternativeName>
</protein>
<accession>D3ZHV2</accession>
<proteinExistence type="evidence at protein level"/>
<reference key="1">
    <citation type="journal article" date="2004" name="Nature">
        <title>Genome sequence of the Brown Norway rat yields insights into mammalian evolution.</title>
        <authorList>
            <person name="Gibbs R.A."/>
            <person name="Weinstock G.M."/>
            <person name="Metzker M.L."/>
            <person name="Muzny D.M."/>
            <person name="Sodergren E.J."/>
            <person name="Scherer S."/>
            <person name="Scott G."/>
            <person name="Steffen D."/>
            <person name="Worley K.C."/>
            <person name="Burch P.E."/>
            <person name="Okwuonu G."/>
            <person name="Hines S."/>
            <person name="Lewis L."/>
            <person name="Deramo C."/>
            <person name="Delgado O."/>
            <person name="Dugan-Rocha S."/>
            <person name="Miner G."/>
            <person name="Morgan M."/>
            <person name="Hawes A."/>
            <person name="Gill R."/>
            <person name="Holt R.A."/>
            <person name="Adams M.D."/>
            <person name="Amanatides P.G."/>
            <person name="Baden-Tillson H."/>
            <person name="Barnstead M."/>
            <person name="Chin S."/>
            <person name="Evans C.A."/>
            <person name="Ferriera S."/>
            <person name="Fosler C."/>
            <person name="Glodek A."/>
            <person name="Gu Z."/>
            <person name="Jennings D."/>
            <person name="Kraft C.L."/>
            <person name="Nguyen T."/>
            <person name="Pfannkoch C.M."/>
            <person name="Sitter C."/>
            <person name="Sutton G.G."/>
            <person name="Venter J.C."/>
            <person name="Woodage T."/>
            <person name="Smith D."/>
            <person name="Lee H.-M."/>
            <person name="Gustafson E."/>
            <person name="Cahill P."/>
            <person name="Kana A."/>
            <person name="Doucette-Stamm L."/>
            <person name="Weinstock K."/>
            <person name="Fechtel K."/>
            <person name="Weiss R.B."/>
            <person name="Dunn D.M."/>
            <person name="Green E.D."/>
            <person name="Blakesley R.W."/>
            <person name="Bouffard G.G."/>
            <person name="De Jong P.J."/>
            <person name="Osoegawa K."/>
            <person name="Zhu B."/>
            <person name="Marra M."/>
            <person name="Schein J."/>
            <person name="Bosdet I."/>
            <person name="Fjell C."/>
            <person name="Jones S."/>
            <person name="Krzywinski M."/>
            <person name="Mathewson C."/>
            <person name="Siddiqui A."/>
            <person name="Wye N."/>
            <person name="McPherson J."/>
            <person name="Zhao S."/>
            <person name="Fraser C.M."/>
            <person name="Shetty J."/>
            <person name="Shatsman S."/>
            <person name="Geer K."/>
            <person name="Chen Y."/>
            <person name="Abramzon S."/>
            <person name="Nierman W.C."/>
            <person name="Havlak P.H."/>
            <person name="Chen R."/>
            <person name="Durbin K.J."/>
            <person name="Egan A."/>
            <person name="Ren Y."/>
            <person name="Song X.-Z."/>
            <person name="Li B."/>
            <person name="Liu Y."/>
            <person name="Qin X."/>
            <person name="Cawley S."/>
            <person name="Cooney A.J."/>
            <person name="D'Souza L.M."/>
            <person name="Martin K."/>
            <person name="Wu J.Q."/>
            <person name="Gonzalez-Garay M.L."/>
            <person name="Jackson A.R."/>
            <person name="Kalafus K.J."/>
            <person name="McLeod M.P."/>
            <person name="Milosavljevic A."/>
            <person name="Virk D."/>
            <person name="Volkov A."/>
            <person name="Wheeler D.A."/>
            <person name="Zhang Z."/>
            <person name="Bailey J.A."/>
            <person name="Eichler E.E."/>
            <person name="Tuzun E."/>
            <person name="Birney E."/>
            <person name="Mongin E."/>
            <person name="Ureta-Vidal A."/>
            <person name="Woodwark C."/>
            <person name="Zdobnov E."/>
            <person name="Bork P."/>
            <person name="Suyama M."/>
            <person name="Torrents D."/>
            <person name="Alexandersson M."/>
            <person name="Trask B.J."/>
            <person name="Young J.M."/>
            <person name="Huang H."/>
            <person name="Wang H."/>
            <person name="Xing H."/>
            <person name="Daniels S."/>
            <person name="Gietzen D."/>
            <person name="Schmidt J."/>
            <person name="Stevens K."/>
            <person name="Vitt U."/>
            <person name="Wingrove J."/>
            <person name="Camara F."/>
            <person name="Mar Alba M."/>
            <person name="Abril J.F."/>
            <person name="Guigo R."/>
            <person name="Smit A."/>
            <person name="Dubchak I."/>
            <person name="Rubin E.M."/>
            <person name="Couronne O."/>
            <person name="Poliakov A."/>
            <person name="Huebner N."/>
            <person name="Ganten D."/>
            <person name="Goesele C."/>
            <person name="Hummel O."/>
            <person name="Kreitler T."/>
            <person name="Lee Y.-A."/>
            <person name="Monti J."/>
            <person name="Schulz H."/>
            <person name="Zimdahl H."/>
            <person name="Himmelbauer H."/>
            <person name="Lehrach H."/>
            <person name="Jacob H.J."/>
            <person name="Bromberg S."/>
            <person name="Gullings-Handley J."/>
            <person name="Jensen-Seaman M.I."/>
            <person name="Kwitek A.E."/>
            <person name="Lazar J."/>
            <person name="Pasko D."/>
            <person name="Tonellato P.J."/>
            <person name="Twigger S."/>
            <person name="Ponting C.P."/>
            <person name="Duarte J.M."/>
            <person name="Rice S."/>
            <person name="Goodstadt L."/>
            <person name="Beatson S.A."/>
            <person name="Emes R.D."/>
            <person name="Winter E.E."/>
            <person name="Webber C."/>
            <person name="Brandt P."/>
            <person name="Nyakatura G."/>
            <person name="Adetobi M."/>
            <person name="Chiaromonte F."/>
            <person name="Elnitski L."/>
            <person name="Eswara P."/>
            <person name="Hardison R.C."/>
            <person name="Hou M."/>
            <person name="Kolbe D."/>
            <person name="Makova K."/>
            <person name="Miller W."/>
            <person name="Nekrutenko A."/>
            <person name="Riemer C."/>
            <person name="Schwartz S."/>
            <person name="Taylor J."/>
            <person name="Yang S."/>
            <person name="Zhang Y."/>
            <person name="Lindpaintner K."/>
            <person name="Andrews T.D."/>
            <person name="Caccamo M."/>
            <person name="Clamp M."/>
            <person name="Clarke L."/>
            <person name="Curwen V."/>
            <person name="Durbin R.M."/>
            <person name="Eyras E."/>
            <person name="Searle S.M."/>
            <person name="Cooper G.M."/>
            <person name="Batzoglou S."/>
            <person name="Brudno M."/>
            <person name="Sidow A."/>
            <person name="Stone E.A."/>
            <person name="Payseur B.A."/>
            <person name="Bourque G."/>
            <person name="Lopez-Otin C."/>
            <person name="Puente X.S."/>
            <person name="Chakrabarti K."/>
            <person name="Chatterji S."/>
            <person name="Dewey C."/>
            <person name="Pachter L."/>
            <person name="Bray N."/>
            <person name="Yap V.B."/>
            <person name="Caspi A."/>
            <person name="Tesler G."/>
            <person name="Pevzner P.A."/>
            <person name="Haussler D."/>
            <person name="Roskin K.M."/>
            <person name="Baertsch R."/>
            <person name="Clawson H."/>
            <person name="Furey T.S."/>
            <person name="Hinrichs A.S."/>
            <person name="Karolchik D."/>
            <person name="Kent W.J."/>
            <person name="Rosenbloom K.R."/>
            <person name="Trumbower H."/>
            <person name="Weirauch M."/>
            <person name="Cooper D.N."/>
            <person name="Stenson P.D."/>
            <person name="Ma B."/>
            <person name="Brent M."/>
            <person name="Arumugam M."/>
            <person name="Shteynberg D."/>
            <person name="Copley R.R."/>
            <person name="Taylor M.S."/>
            <person name="Riethman H."/>
            <person name="Mudunuri U."/>
            <person name="Peterson J."/>
            <person name="Guyer M."/>
            <person name="Felsenfeld A."/>
            <person name="Old S."/>
            <person name="Mockrin S."/>
            <person name="Collins F.S."/>
        </authorList>
    </citation>
    <scope>NUCLEOTIDE SEQUENCE [LARGE SCALE GENOMIC DNA]</scope>
    <source>
        <strain>Brown Norway</strain>
    </source>
</reference>
<reference key="2">
    <citation type="journal article" date="2006" name="Genes Dev.">
        <title>The role of microtubule actin cross-linking factor 1 (MACF1) in the Wnt signaling pathway.</title>
        <authorList>
            <person name="Chen H.J."/>
            <person name="Lin C.M."/>
            <person name="Lin C.S."/>
            <person name="Perez-Olle R."/>
            <person name="Leung C.L."/>
            <person name="Liem R.K."/>
        </authorList>
    </citation>
    <scope>SUBCELLULAR LOCATION</scope>
    <scope>INTERACTION WITH AXIN1 AND LRP6</scope>
    <scope>IDENTIFICATION IN A COMPLEX WITH AXIN1; APC; GSK3B AND CTNNB1</scope>
</reference>
<reference key="3">
    <citation type="journal article" date="2006" name="Proc. Natl. Acad. Sci. U.S.A.">
        <title>Quantitative phosphoproteomics of vasopressin-sensitive renal cells: regulation of aquaporin-2 phosphorylation at two sites.</title>
        <authorList>
            <person name="Hoffert J.D."/>
            <person name="Pisitkun T."/>
            <person name="Wang G."/>
            <person name="Shen R.-F."/>
            <person name="Knepper M.A."/>
        </authorList>
    </citation>
    <scope>PHOSPHORYLATION [LARGE SCALE ANALYSIS] AT THR-5296</scope>
    <scope>IDENTIFICATION BY MASS SPECTROMETRY [LARGE SCALE ANALYSIS]</scope>
</reference>
<reference key="4">
    <citation type="journal article" date="2012" name="Nat. Commun.">
        <title>Quantitative maps of protein phosphorylation sites across 14 different rat organs and tissues.</title>
        <authorList>
            <person name="Lundby A."/>
            <person name="Secher A."/>
            <person name="Lage K."/>
            <person name="Nordsborg N.B."/>
            <person name="Dmytriyev A."/>
            <person name="Lundby C."/>
            <person name="Olsen J.V."/>
        </authorList>
    </citation>
    <scope>PHOSPHORYLATION [LARGE SCALE ANALYSIS] AT SER-4; SER-280; SER-1860; SER-2429; SER-2454 AND SER-4074</scope>
    <scope>IDENTIFICATION BY MASS SPECTROMETRY [LARGE SCALE ANALYSIS]</scope>
</reference>
<dbReference type="EMBL" id="AC114512">
    <property type="status" value="NOT_ANNOTATED_CDS"/>
    <property type="molecule type" value="Genomic_DNA"/>
</dbReference>
<dbReference type="EMBL" id="AC131172">
    <property type="status" value="NOT_ANNOTATED_CDS"/>
    <property type="molecule type" value="Genomic_DNA"/>
</dbReference>
<dbReference type="RefSeq" id="XP_017448990.1">
    <property type="nucleotide sequence ID" value="XM_017593501.1"/>
</dbReference>
<dbReference type="SMR" id="D3ZHV2"/>
<dbReference type="CORUM" id="D3ZHV2"/>
<dbReference type="FunCoup" id="D3ZHV2">
    <property type="interactions" value="1662"/>
</dbReference>
<dbReference type="IntAct" id="D3ZHV2">
    <property type="interactions" value="1"/>
</dbReference>
<dbReference type="MINT" id="D3ZHV2"/>
<dbReference type="STRING" id="10116.ENSRNOP00000075119"/>
<dbReference type="CarbonylDB" id="D3ZHV2"/>
<dbReference type="GlyGen" id="D3ZHV2">
    <property type="glycosylation" value="1 site"/>
</dbReference>
<dbReference type="iPTMnet" id="D3ZHV2"/>
<dbReference type="jPOST" id="D3ZHV2"/>
<dbReference type="PaxDb" id="10116-ENSRNOP00000041065"/>
<dbReference type="PeptideAtlas" id="D3ZHV2"/>
<dbReference type="UCSC" id="RGD:1306057">
    <property type="organism name" value="rat"/>
</dbReference>
<dbReference type="AGR" id="RGD:1306057"/>
<dbReference type="RGD" id="1306057">
    <property type="gene designation" value="Macf1"/>
</dbReference>
<dbReference type="eggNOG" id="KOG0516">
    <property type="taxonomic scope" value="Eukaryota"/>
</dbReference>
<dbReference type="InParanoid" id="D3ZHV2"/>
<dbReference type="PRO" id="PR:D3ZHV2"/>
<dbReference type="Proteomes" id="UP000002494">
    <property type="component" value="Unplaced"/>
</dbReference>
<dbReference type="GO" id="GO:0015629">
    <property type="term" value="C:actin cytoskeleton"/>
    <property type="evidence" value="ECO:0000266"/>
    <property type="project" value="RGD"/>
</dbReference>
<dbReference type="GO" id="GO:0005737">
    <property type="term" value="C:cytoplasm"/>
    <property type="evidence" value="ECO:0000250"/>
    <property type="project" value="UniProtKB"/>
</dbReference>
<dbReference type="GO" id="GO:0005794">
    <property type="term" value="C:Golgi apparatus"/>
    <property type="evidence" value="ECO:0000250"/>
    <property type="project" value="UniProtKB"/>
</dbReference>
<dbReference type="GO" id="GO:0016020">
    <property type="term" value="C:membrane"/>
    <property type="evidence" value="ECO:0000314"/>
    <property type="project" value="UniProtKB"/>
</dbReference>
<dbReference type="GO" id="GO:0005874">
    <property type="term" value="C:microtubule"/>
    <property type="evidence" value="ECO:0000250"/>
    <property type="project" value="UniProtKB"/>
</dbReference>
<dbReference type="GO" id="GO:0015630">
    <property type="term" value="C:microtubule cytoskeleton"/>
    <property type="evidence" value="ECO:0000266"/>
    <property type="project" value="RGD"/>
</dbReference>
<dbReference type="GO" id="GO:0005886">
    <property type="term" value="C:plasma membrane"/>
    <property type="evidence" value="ECO:0000250"/>
    <property type="project" value="UniProtKB"/>
</dbReference>
<dbReference type="GO" id="GO:0014069">
    <property type="term" value="C:postsynaptic density"/>
    <property type="evidence" value="ECO:0000266"/>
    <property type="project" value="RGD"/>
</dbReference>
<dbReference type="GO" id="GO:0032587">
    <property type="term" value="C:ruffle membrane"/>
    <property type="evidence" value="ECO:0000250"/>
    <property type="project" value="UniProtKB"/>
</dbReference>
<dbReference type="GO" id="GO:0003779">
    <property type="term" value="F:actin binding"/>
    <property type="evidence" value="ECO:0000266"/>
    <property type="project" value="RGD"/>
</dbReference>
<dbReference type="GO" id="GO:0051015">
    <property type="term" value="F:actin filament binding"/>
    <property type="evidence" value="ECO:0000250"/>
    <property type="project" value="UniProtKB"/>
</dbReference>
<dbReference type="GO" id="GO:0016887">
    <property type="term" value="F:ATP hydrolysis activity"/>
    <property type="evidence" value="ECO:0000266"/>
    <property type="project" value="RGD"/>
</dbReference>
<dbReference type="GO" id="GO:0005509">
    <property type="term" value="F:calcium ion binding"/>
    <property type="evidence" value="ECO:0007669"/>
    <property type="project" value="InterPro"/>
</dbReference>
<dbReference type="GO" id="GO:0008017">
    <property type="term" value="F:microtubule binding"/>
    <property type="evidence" value="ECO:0000266"/>
    <property type="project" value="RGD"/>
</dbReference>
<dbReference type="GO" id="GO:0051011">
    <property type="term" value="F:microtubule minus-end binding"/>
    <property type="evidence" value="ECO:0000250"/>
    <property type="project" value="UniProtKB"/>
</dbReference>
<dbReference type="GO" id="GO:0005198">
    <property type="term" value="F:structural molecule activity"/>
    <property type="evidence" value="ECO:0000318"/>
    <property type="project" value="GO_Central"/>
</dbReference>
<dbReference type="GO" id="GO:0016477">
    <property type="term" value="P:cell migration"/>
    <property type="evidence" value="ECO:0000266"/>
    <property type="project" value="RGD"/>
</dbReference>
<dbReference type="GO" id="GO:0007163">
    <property type="term" value="P:establishment or maintenance of cell polarity"/>
    <property type="evidence" value="ECO:0000266"/>
    <property type="project" value="RGD"/>
</dbReference>
<dbReference type="GO" id="GO:0043001">
    <property type="term" value="P:Golgi to plasma membrane protein transport"/>
    <property type="evidence" value="ECO:0000250"/>
    <property type="project" value="UniProtKB"/>
</dbReference>
<dbReference type="GO" id="GO:0045104">
    <property type="term" value="P:intermediate filament cytoskeleton organization"/>
    <property type="evidence" value="ECO:0000318"/>
    <property type="project" value="GO_Central"/>
</dbReference>
<dbReference type="GO" id="GO:0001707">
    <property type="term" value="P:mesoderm formation"/>
    <property type="evidence" value="ECO:0000266"/>
    <property type="project" value="RGD"/>
</dbReference>
<dbReference type="GO" id="GO:0045773">
    <property type="term" value="P:positive regulation of axon extension"/>
    <property type="evidence" value="ECO:0000266"/>
    <property type="project" value="RGD"/>
</dbReference>
<dbReference type="GO" id="GO:0030177">
    <property type="term" value="P:positive regulation of Wnt signaling pathway"/>
    <property type="evidence" value="ECO:0000315"/>
    <property type="project" value="UniProtKB"/>
</dbReference>
<dbReference type="GO" id="GO:0006620">
    <property type="term" value="P:post-translational protein targeting to endoplasmic reticulum membrane"/>
    <property type="evidence" value="ECO:0000266"/>
    <property type="project" value="RGD"/>
</dbReference>
<dbReference type="GO" id="GO:0030334">
    <property type="term" value="P:regulation of cell migration"/>
    <property type="evidence" value="ECO:0000250"/>
    <property type="project" value="UniProtKB"/>
</dbReference>
<dbReference type="GO" id="GO:0010632">
    <property type="term" value="P:regulation of epithelial cell migration"/>
    <property type="evidence" value="ECO:0000250"/>
    <property type="project" value="UniProtKB"/>
</dbReference>
<dbReference type="GO" id="GO:0051893">
    <property type="term" value="P:regulation of focal adhesion assembly"/>
    <property type="evidence" value="ECO:0000250"/>
    <property type="project" value="UniProtKB"/>
</dbReference>
<dbReference type="GO" id="GO:0032886">
    <property type="term" value="P:regulation of microtubule-based process"/>
    <property type="evidence" value="ECO:0000250"/>
    <property type="project" value="UniProtKB"/>
</dbReference>
<dbReference type="GO" id="GO:0150011">
    <property type="term" value="P:regulation of neuron projection arborization"/>
    <property type="evidence" value="ECO:0000250"/>
    <property type="project" value="UniProtKB"/>
</dbReference>
<dbReference type="GO" id="GO:0016055">
    <property type="term" value="P:Wnt signaling pathway"/>
    <property type="evidence" value="ECO:0000266"/>
    <property type="project" value="RGD"/>
</dbReference>
<dbReference type="GO" id="GO:0042060">
    <property type="term" value="P:wound healing"/>
    <property type="evidence" value="ECO:0000250"/>
    <property type="project" value="UniProtKB"/>
</dbReference>
<dbReference type="CDD" id="cd21240">
    <property type="entry name" value="CH_MACF1_rpt2"/>
    <property type="match status" value="1"/>
</dbReference>
<dbReference type="CDD" id="cd21188">
    <property type="entry name" value="CH_PLEC-like_rpt1"/>
    <property type="match status" value="1"/>
</dbReference>
<dbReference type="CDD" id="cd00051">
    <property type="entry name" value="EFh"/>
    <property type="match status" value="1"/>
</dbReference>
<dbReference type="CDD" id="cd00176">
    <property type="entry name" value="SPEC"/>
    <property type="match status" value="15"/>
</dbReference>
<dbReference type="FunFam" id="1.20.58.60:FF:000009">
    <property type="entry name" value="dystonin isoform X1"/>
    <property type="match status" value="1"/>
</dbReference>
<dbReference type="FunFam" id="1.10.238.10:FF:000013">
    <property type="entry name" value="Microtubule-actin cross-linking factor 1"/>
    <property type="match status" value="1"/>
</dbReference>
<dbReference type="FunFam" id="1.10.418.10:FF:000002">
    <property type="entry name" value="Microtubule-actin cross-linking factor 1"/>
    <property type="match status" value="1"/>
</dbReference>
<dbReference type="FunFam" id="1.10.418.10:FF:000017">
    <property type="entry name" value="Microtubule-actin cross-linking factor 1"/>
    <property type="match status" value="1"/>
</dbReference>
<dbReference type="FunFam" id="1.20.58.60:FF:000001">
    <property type="entry name" value="Microtubule-actin cross-linking factor 1"/>
    <property type="match status" value="3"/>
</dbReference>
<dbReference type="FunFam" id="1.20.58.60:FF:000012">
    <property type="entry name" value="Microtubule-actin cross-linking factor 1"/>
    <property type="match status" value="1"/>
</dbReference>
<dbReference type="FunFam" id="1.20.58.60:FF:000016">
    <property type="entry name" value="Microtubule-actin cross-linking factor 1"/>
    <property type="match status" value="1"/>
</dbReference>
<dbReference type="FunFam" id="1.20.58.60:FF:000021">
    <property type="entry name" value="Microtubule-actin cross-linking factor 1"/>
    <property type="match status" value="1"/>
</dbReference>
<dbReference type="FunFam" id="1.20.58.60:FF:000022">
    <property type="entry name" value="Microtubule-actin cross-linking factor 1"/>
    <property type="match status" value="1"/>
</dbReference>
<dbReference type="FunFam" id="1.20.58.60:FF:000027">
    <property type="entry name" value="Microtubule-actin cross-linking factor 1"/>
    <property type="match status" value="1"/>
</dbReference>
<dbReference type="FunFam" id="1.20.58.60:FF:000031">
    <property type="entry name" value="Microtubule-actin cross-linking factor 1"/>
    <property type="match status" value="1"/>
</dbReference>
<dbReference type="FunFam" id="1.20.58.60:FF:000116">
    <property type="entry name" value="Microtubule-actin cross-linking factor 1"/>
    <property type="match status" value="1"/>
</dbReference>
<dbReference type="FunFam" id="2.30.30.40:FF:000011">
    <property type="entry name" value="Microtubule-actin cross-linking factor 1"/>
    <property type="match status" value="1"/>
</dbReference>
<dbReference type="FunFam" id="3.30.920.20:FF:000001">
    <property type="entry name" value="Microtubule-actin cross-linking factor 1"/>
    <property type="match status" value="1"/>
</dbReference>
<dbReference type="FunFam" id="1.20.58.60:FF:000008">
    <property type="entry name" value="microtubule-actin cross-linking factor 1"/>
    <property type="match status" value="2"/>
</dbReference>
<dbReference type="FunFam" id="1.20.58.60:FF:000014">
    <property type="entry name" value="microtubule-actin cross-linking factor 1"/>
    <property type="match status" value="1"/>
</dbReference>
<dbReference type="FunFam" id="1.20.58.60:FF:000025">
    <property type="entry name" value="microtubule-actin cross-linking factor 1"/>
    <property type="match status" value="1"/>
</dbReference>
<dbReference type="FunFam" id="1.20.58.60:FF:000084">
    <property type="entry name" value="microtubule-actin cross-linking factor 1 isoform X2"/>
    <property type="match status" value="1"/>
</dbReference>
<dbReference type="FunFam" id="1.20.58.60:FF:000087">
    <property type="entry name" value="microtubule-actin cross-linking factor 1 isoform X2"/>
    <property type="match status" value="1"/>
</dbReference>
<dbReference type="FunFam" id="1.20.58.60:FF:000088">
    <property type="entry name" value="microtubule-actin cross-linking factor 1 isoform X2"/>
    <property type="match status" value="1"/>
</dbReference>
<dbReference type="FunFam" id="1.20.58.60:FF:000090">
    <property type="entry name" value="microtubule-actin cross-linking factor 1 isoform X2"/>
    <property type="match status" value="1"/>
</dbReference>
<dbReference type="FunFam" id="1.20.58.60:FF:000092">
    <property type="entry name" value="microtubule-actin cross-linking factor 1 isoform X2"/>
    <property type="match status" value="1"/>
</dbReference>
<dbReference type="FunFam" id="1.20.58.60:FF:000095">
    <property type="entry name" value="microtubule-actin cross-linking factor 1 isoform X2"/>
    <property type="match status" value="1"/>
</dbReference>
<dbReference type="FunFam" id="1.20.58.60:FF:000097">
    <property type="entry name" value="microtubule-actin cross-linking factor 1 isoform X2"/>
    <property type="match status" value="1"/>
</dbReference>
<dbReference type="FunFam" id="1.20.58.60:FF:000048">
    <property type="entry name" value="microtubule-actin cross-linking factor 1 isoform X3"/>
    <property type="match status" value="1"/>
</dbReference>
<dbReference type="FunFam" id="1.20.58.60:FF:000061">
    <property type="entry name" value="microtubule-actin cross-linking factor 1 isoform X3"/>
    <property type="match status" value="1"/>
</dbReference>
<dbReference type="FunFam" id="1.20.58.60:FF:000134">
    <property type="entry name" value="microtubule-actin cross-linking factor 1 isoform X4"/>
    <property type="match status" value="1"/>
</dbReference>
<dbReference type="FunFam" id="1.20.58.60:FF:000234">
    <property type="entry name" value="microtubule-actin cross-linking factor 1 isoform X6"/>
    <property type="match status" value="1"/>
</dbReference>
<dbReference type="FunFam" id="1.20.58.60:FF:000108">
    <property type="entry name" value="microtubule-actin cross-linking factor 1 isoform X8"/>
    <property type="match status" value="1"/>
</dbReference>
<dbReference type="FunFam" id="1.20.58.60:FF:000089">
    <property type="entry name" value="microtubule-actin cross-linking factor 1 isoform X9"/>
    <property type="match status" value="1"/>
</dbReference>
<dbReference type="FunFam" id="1.20.58.60:FF:000127">
    <property type="entry name" value="microtubule-actin cross-linking factor 1 isoform X9"/>
    <property type="match status" value="1"/>
</dbReference>
<dbReference type="FunFam" id="1.20.58.60:FF:000132">
    <property type="entry name" value="microtubule-actin cross-linking factor 1 isoform X9"/>
    <property type="match status" value="1"/>
</dbReference>
<dbReference type="FunFam" id="1.20.58.60:FF:000167">
    <property type="entry name" value="microtubule-actin cross-linking factor 1 isoform X9"/>
    <property type="match status" value="1"/>
</dbReference>
<dbReference type="FunFam" id="1.20.58.60:FF:000010">
    <property type="entry name" value="plectin isoform X2"/>
    <property type="match status" value="1"/>
</dbReference>
<dbReference type="Gene3D" id="1.20.58.1060">
    <property type="match status" value="1"/>
</dbReference>
<dbReference type="Gene3D" id="1.20.58.60">
    <property type="match status" value="33"/>
</dbReference>
<dbReference type="Gene3D" id="1.10.418.10">
    <property type="entry name" value="Calponin-like domain"/>
    <property type="match status" value="2"/>
</dbReference>
<dbReference type="Gene3D" id="1.10.238.10">
    <property type="entry name" value="EF-hand"/>
    <property type="match status" value="1"/>
</dbReference>
<dbReference type="Gene3D" id="3.30.920.20">
    <property type="entry name" value="Gas2-like domain"/>
    <property type="match status" value="1"/>
</dbReference>
<dbReference type="Gene3D" id="2.30.30.40">
    <property type="entry name" value="SH3 Domains"/>
    <property type="match status" value="1"/>
</dbReference>
<dbReference type="InterPro" id="IPR001589">
    <property type="entry name" value="Actinin_actin-bd_CS"/>
</dbReference>
<dbReference type="InterPro" id="IPR001715">
    <property type="entry name" value="CH_dom"/>
</dbReference>
<dbReference type="InterPro" id="IPR036872">
    <property type="entry name" value="CH_dom_sf"/>
</dbReference>
<dbReference type="InterPro" id="IPR041615">
    <property type="entry name" value="Desmoplakin_SH3"/>
</dbReference>
<dbReference type="InterPro" id="IPR041573">
    <property type="entry name" value="Desmoplakin_Spectrin-like"/>
</dbReference>
<dbReference type="InterPro" id="IPR011992">
    <property type="entry name" value="EF-hand-dom_pair"/>
</dbReference>
<dbReference type="InterPro" id="IPR018247">
    <property type="entry name" value="EF_Hand_1_Ca_BS"/>
</dbReference>
<dbReference type="InterPro" id="IPR002048">
    <property type="entry name" value="EF_hand_dom"/>
</dbReference>
<dbReference type="InterPro" id="IPR003108">
    <property type="entry name" value="GAR_dom"/>
</dbReference>
<dbReference type="InterPro" id="IPR036534">
    <property type="entry name" value="GAR_dom_sf"/>
</dbReference>
<dbReference type="InterPro" id="IPR049538">
    <property type="entry name" value="PCN-like_spectrin-like_rpt"/>
</dbReference>
<dbReference type="InterPro" id="IPR043197">
    <property type="entry name" value="Plakin"/>
</dbReference>
<dbReference type="InterPro" id="IPR001452">
    <property type="entry name" value="SH3_domain"/>
</dbReference>
<dbReference type="InterPro" id="IPR018159">
    <property type="entry name" value="Spectrin/alpha-actinin"/>
</dbReference>
<dbReference type="InterPro" id="IPR002017">
    <property type="entry name" value="Spectrin_repeat"/>
</dbReference>
<dbReference type="PANTHER" id="PTHR23169">
    <property type="entry name" value="ENVOPLAKIN"/>
    <property type="match status" value="1"/>
</dbReference>
<dbReference type="PANTHER" id="PTHR23169:SF25">
    <property type="entry name" value="MICROTUBULE-ACTIN CROSS-LINKING FACTOR 1, ISOFORMS 1_2_3_4_5"/>
    <property type="match status" value="1"/>
</dbReference>
<dbReference type="Pfam" id="PF00307">
    <property type="entry name" value="CH"/>
    <property type="match status" value="2"/>
</dbReference>
<dbReference type="Pfam" id="PF13499">
    <property type="entry name" value="EF-hand_7"/>
    <property type="match status" value="1"/>
</dbReference>
<dbReference type="Pfam" id="PF02187">
    <property type="entry name" value="GAS2"/>
    <property type="match status" value="1"/>
</dbReference>
<dbReference type="Pfam" id="PF17902">
    <property type="entry name" value="SH3_10"/>
    <property type="match status" value="1"/>
</dbReference>
<dbReference type="Pfam" id="PF00435">
    <property type="entry name" value="Spectrin"/>
    <property type="match status" value="18"/>
</dbReference>
<dbReference type="Pfam" id="PF18373">
    <property type="entry name" value="Spectrin_2"/>
    <property type="match status" value="1"/>
</dbReference>
<dbReference type="Pfam" id="PF21019">
    <property type="entry name" value="Spectrin_3"/>
    <property type="match status" value="1"/>
</dbReference>
<dbReference type="Pfam" id="PF21020">
    <property type="entry name" value="Spectrin_4"/>
    <property type="match status" value="1"/>
</dbReference>
<dbReference type="Pfam" id="PF21097">
    <property type="entry name" value="SR_plectin_7"/>
    <property type="match status" value="1"/>
</dbReference>
<dbReference type="SMART" id="SM00033">
    <property type="entry name" value="CH"/>
    <property type="match status" value="2"/>
</dbReference>
<dbReference type="SMART" id="SM01129">
    <property type="entry name" value="DELLA"/>
    <property type="match status" value="1"/>
</dbReference>
<dbReference type="SMART" id="SM00054">
    <property type="entry name" value="EFh"/>
    <property type="match status" value="2"/>
</dbReference>
<dbReference type="SMART" id="SM00243">
    <property type="entry name" value="GAS2"/>
    <property type="match status" value="1"/>
</dbReference>
<dbReference type="SMART" id="SM00150">
    <property type="entry name" value="SPEC"/>
    <property type="match status" value="34"/>
</dbReference>
<dbReference type="SUPFAM" id="SSF47576">
    <property type="entry name" value="Calponin-homology domain, CH-domain"/>
    <property type="match status" value="1"/>
</dbReference>
<dbReference type="SUPFAM" id="SSF47473">
    <property type="entry name" value="EF-hand"/>
    <property type="match status" value="1"/>
</dbReference>
<dbReference type="SUPFAM" id="SSF143575">
    <property type="entry name" value="GAS2 domain-like"/>
    <property type="match status" value="1"/>
</dbReference>
<dbReference type="SUPFAM" id="SSF46966">
    <property type="entry name" value="Spectrin repeat"/>
    <property type="match status" value="31"/>
</dbReference>
<dbReference type="PROSITE" id="PS00019">
    <property type="entry name" value="ACTININ_1"/>
    <property type="match status" value="1"/>
</dbReference>
<dbReference type="PROSITE" id="PS00020">
    <property type="entry name" value="ACTININ_2"/>
    <property type="match status" value="1"/>
</dbReference>
<dbReference type="PROSITE" id="PS50021">
    <property type="entry name" value="CH"/>
    <property type="match status" value="2"/>
</dbReference>
<dbReference type="PROSITE" id="PS00018">
    <property type="entry name" value="EF_HAND_1"/>
    <property type="match status" value="2"/>
</dbReference>
<dbReference type="PROSITE" id="PS50222">
    <property type="entry name" value="EF_HAND_2"/>
    <property type="match status" value="2"/>
</dbReference>
<dbReference type="PROSITE" id="PS51460">
    <property type="entry name" value="GAR"/>
    <property type="match status" value="1"/>
</dbReference>
<dbReference type="PROSITE" id="PS50002">
    <property type="entry name" value="SH3"/>
    <property type="match status" value="1"/>
</dbReference>
<name>MACF1_RAT</name>
<evidence type="ECO:0000250" key="1"/>
<evidence type="ECO:0000250" key="2">
    <source>
        <dbReference type="UniProtKB" id="Q9QXZ0"/>
    </source>
</evidence>
<evidence type="ECO:0000250" key="3">
    <source>
        <dbReference type="UniProtKB" id="Q9UPN3"/>
    </source>
</evidence>
<evidence type="ECO:0000255" key="4">
    <source>
        <dbReference type="PROSITE-ProRule" id="PRU00044"/>
    </source>
</evidence>
<evidence type="ECO:0000255" key="5">
    <source>
        <dbReference type="PROSITE-ProRule" id="PRU00192"/>
    </source>
</evidence>
<evidence type="ECO:0000255" key="6">
    <source>
        <dbReference type="PROSITE-ProRule" id="PRU00448"/>
    </source>
</evidence>
<evidence type="ECO:0000255" key="7">
    <source>
        <dbReference type="PROSITE-ProRule" id="PRU00792"/>
    </source>
</evidence>
<evidence type="ECO:0000256" key="8">
    <source>
        <dbReference type="SAM" id="MobiDB-lite"/>
    </source>
</evidence>
<evidence type="ECO:0000269" key="9">
    <source>
    </source>
</evidence>
<evidence type="ECO:0000305" key="10"/>
<evidence type="ECO:0000312" key="11">
    <source>
        <dbReference type="RGD" id="1306057"/>
    </source>
</evidence>
<evidence type="ECO:0007744" key="12">
    <source>
    </source>
</evidence>
<evidence type="ECO:0007744" key="13">
    <source>
    </source>
</evidence>